<feature type="chain" id="PRO_1000002922" description="UDP-N-acetylenolpyruvoylglucosamine reductase">
    <location>
        <begin position="1"/>
        <end position="295"/>
    </location>
</feature>
<feature type="domain" description="FAD-binding PCMH-type" evidence="1">
    <location>
        <begin position="23"/>
        <end position="188"/>
    </location>
</feature>
<feature type="active site" evidence="1">
    <location>
        <position position="167"/>
    </location>
</feature>
<feature type="active site" description="Proton donor" evidence="1">
    <location>
        <position position="217"/>
    </location>
</feature>
<feature type="active site" evidence="1">
    <location>
        <position position="287"/>
    </location>
</feature>
<sequence length="295" mass="32335">MITELHGIDIRENEPLKHYTYTKVGGPADFLAFPRNHYELSRIVAYANKENMPWLVLGNASNLIVRDGGIRGFVIMFDKLNAVHLNGYTLEAEAGANLIETTKIAKFHSLTGFEFACGIPGSIGGAVFMNAGAYGGEISHIFLSAKVLTSSGEIKTISARDMAFGYRHSAIQETGDIVISAKFALKPGNYDTISQEMNRLNHLRQLKQPLEFPSCGSVFKRPPGHFAGQLIMEANLKGHRIGGVEVSEKHAGFMINVADGTAKDYEDLIAYVIETVENHSGVRLEPEVRIIGENL</sequence>
<evidence type="ECO:0000255" key="1">
    <source>
        <dbReference type="HAMAP-Rule" id="MF_00037"/>
    </source>
</evidence>
<comment type="function">
    <text evidence="1">Cell wall formation.</text>
</comment>
<comment type="catalytic activity">
    <reaction evidence="1">
        <text>UDP-N-acetyl-alpha-D-muramate + NADP(+) = UDP-N-acetyl-3-O-(1-carboxyvinyl)-alpha-D-glucosamine + NADPH + H(+)</text>
        <dbReference type="Rhea" id="RHEA:12248"/>
        <dbReference type="ChEBI" id="CHEBI:15378"/>
        <dbReference type="ChEBI" id="CHEBI:57783"/>
        <dbReference type="ChEBI" id="CHEBI:58349"/>
        <dbReference type="ChEBI" id="CHEBI:68483"/>
        <dbReference type="ChEBI" id="CHEBI:70757"/>
        <dbReference type="EC" id="1.3.1.98"/>
    </reaction>
</comment>
<comment type="cofactor">
    <cofactor evidence="1">
        <name>FAD</name>
        <dbReference type="ChEBI" id="CHEBI:57692"/>
    </cofactor>
</comment>
<comment type="pathway">
    <text evidence="1">Cell wall biogenesis; peptidoglycan biosynthesis.</text>
</comment>
<comment type="subcellular location">
    <subcellularLocation>
        <location evidence="1">Cytoplasm</location>
    </subcellularLocation>
</comment>
<comment type="similarity">
    <text evidence="1">Belongs to the MurB family.</text>
</comment>
<accession>A2REL5</accession>
<keyword id="KW-0131">Cell cycle</keyword>
<keyword id="KW-0132">Cell division</keyword>
<keyword id="KW-0133">Cell shape</keyword>
<keyword id="KW-0961">Cell wall biogenesis/degradation</keyword>
<keyword id="KW-0963">Cytoplasm</keyword>
<keyword id="KW-0274">FAD</keyword>
<keyword id="KW-0285">Flavoprotein</keyword>
<keyword id="KW-0521">NADP</keyword>
<keyword id="KW-0560">Oxidoreductase</keyword>
<keyword id="KW-0573">Peptidoglycan synthesis</keyword>
<name>MURB_STRPG</name>
<gene>
    <name evidence="1" type="primary">murB</name>
    <name type="ordered locus">SpyM50963</name>
</gene>
<proteinExistence type="inferred from homology"/>
<organism>
    <name type="scientific">Streptococcus pyogenes serotype M5 (strain Manfredo)</name>
    <dbReference type="NCBI Taxonomy" id="160491"/>
    <lineage>
        <taxon>Bacteria</taxon>
        <taxon>Bacillati</taxon>
        <taxon>Bacillota</taxon>
        <taxon>Bacilli</taxon>
        <taxon>Lactobacillales</taxon>
        <taxon>Streptococcaceae</taxon>
        <taxon>Streptococcus</taxon>
    </lineage>
</organism>
<dbReference type="EC" id="1.3.1.98" evidence="1"/>
<dbReference type="EMBL" id="AM295007">
    <property type="protein sequence ID" value="CAM30290.1"/>
    <property type="molecule type" value="Genomic_DNA"/>
</dbReference>
<dbReference type="RefSeq" id="WP_002995339.1">
    <property type="nucleotide sequence ID" value="NC_009332.1"/>
</dbReference>
<dbReference type="SMR" id="A2REL5"/>
<dbReference type="GeneID" id="69900907"/>
<dbReference type="KEGG" id="spf:SpyM50963"/>
<dbReference type="HOGENOM" id="CLU_035304_1_1_9"/>
<dbReference type="UniPathway" id="UPA00219"/>
<dbReference type="GO" id="GO:0005829">
    <property type="term" value="C:cytosol"/>
    <property type="evidence" value="ECO:0007669"/>
    <property type="project" value="TreeGrafter"/>
</dbReference>
<dbReference type="GO" id="GO:0071949">
    <property type="term" value="F:FAD binding"/>
    <property type="evidence" value="ECO:0007669"/>
    <property type="project" value="InterPro"/>
</dbReference>
<dbReference type="GO" id="GO:0008762">
    <property type="term" value="F:UDP-N-acetylmuramate dehydrogenase activity"/>
    <property type="evidence" value="ECO:0007669"/>
    <property type="project" value="UniProtKB-UniRule"/>
</dbReference>
<dbReference type="GO" id="GO:0051301">
    <property type="term" value="P:cell division"/>
    <property type="evidence" value="ECO:0007669"/>
    <property type="project" value="UniProtKB-KW"/>
</dbReference>
<dbReference type="GO" id="GO:0071555">
    <property type="term" value="P:cell wall organization"/>
    <property type="evidence" value="ECO:0007669"/>
    <property type="project" value="UniProtKB-KW"/>
</dbReference>
<dbReference type="GO" id="GO:0009252">
    <property type="term" value="P:peptidoglycan biosynthetic process"/>
    <property type="evidence" value="ECO:0007669"/>
    <property type="project" value="UniProtKB-UniRule"/>
</dbReference>
<dbReference type="GO" id="GO:0008360">
    <property type="term" value="P:regulation of cell shape"/>
    <property type="evidence" value="ECO:0007669"/>
    <property type="project" value="UniProtKB-KW"/>
</dbReference>
<dbReference type="Gene3D" id="3.30.465.10">
    <property type="match status" value="1"/>
</dbReference>
<dbReference type="Gene3D" id="3.90.78.10">
    <property type="entry name" value="UDP-N-acetylenolpyruvoylglucosamine reductase, C-terminal domain"/>
    <property type="match status" value="1"/>
</dbReference>
<dbReference type="Gene3D" id="3.30.43.10">
    <property type="entry name" value="Uridine Diphospho-n-acetylenolpyruvylglucosamine Reductase, domain 2"/>
    <property type="match status" value="1"/>
</dbReference>
<dbReference type="HAMAP" id="MF_00037">
    <property type="entry name" value="MurB"/>
    <property type="match status" value="1"/>
</dbReference>
<dbReference type="InterPro" id="IPR016166">
    <property type="entry name" value="FAD-bd_PCMH"/>
</dbReference>
<dbReference type="InterPro" id="IPR036318">
    <property type="entry name" value="FAD-bd_PCMH-like_sf"/>
</dbReference>
<dbReference type="InterPro" id="IPR016167">
    <property type="entry name" value="FAD-bd_PCMH_sub1"/>
</dbReference>
<dbReference type="InterPro" id="IPR016169">
    <property type="entry name" value="FAD-bd_PCMH_sub2"/>
</dbReference>
<dbReference type="InterPro" id="IPR003170">
    <property type="entry name" value="MurB"/>
</dbReference>
<dbReference type="InterPro" id="IPR011601">
    <property type="entry name" value="MurB_C"/>
</dbReference>
<dbReference type="InterPro" id="IPR036635">
    <property type="entry name" value="MurB_C_sf"/>
</dbReference>
<dbReference type="InterPro" id="IPR006094">
    <property type="entry name" value="Oxid_FAD_bind_N"/>
</dbReference>
<dbReference type="NCBIfam" id="TIGR00179">
    <property type="entry name" value="murB"/>
    <property type="match status" value="1"/>
</dbReference>
<dbReference type="NCBIfam" id="NF010480">
    <property type="entry name" value="PRK13905.1"/>
    <property type="match status" value="1"/>
</dbReference>
<dbReference type="PANTHER" id="PTHR21071">
    <property type="entry name" value="UDP-N-ACETYLENOLPYRUVOYLGLUCOSAMINE REDUCTASE"/>
    <property type="match status" value="1"/>
</dbReference>
<dbReference type="PANTHER" id="PTHR21071:SF4">
    <property type="entry name" value="UDP-N-ACETYLENOLPYRUVOYLGLUCOSAMINE REDUCTASE"/>
    <property type="match status" value="1"/>
</dbReference>
<dbReference type="Pfam" id="PF01565">
    <property type="entry name" value="FAD_binding_4"/>
    <property type="match status" value="1"/>
</dbReference>
<dbReference type="Pfam" id="PF02873">
    <property type="entry name" value="MurB_C"/>
    <property type="match status" value="1"/>
</dbReference>
<dbReference type="SUPFAM" id="SSF56176">
    <property type="entry name" value="FAD-binding/transporter-associated domain-like"/>
    <property type="match status" value="1"/>
</dbReference>
<dbReference type="SUPFAM" id="SSF56194">
    <property type="entry name" value="Uridine diphospho-N-Acetylenolpyruvylglucosamine reductase, MurB, C-terminal domain"/>
    <property type="match status" value="1"/>
</dbReference>
<dbReference type="PROSITE" id="PS51387">
    <property type="entry name" value="FAD_PCMH"/>
    <property type="match status" value="1"/>
</dbReference>
<protein>
    <recommendedName>
        <fullName evidence="1">UDP-N-acetylenolpyruvoylglucosamine reductase</fullName>
        <ecNumber evidence="1">1.3.1.98</ecNumber>
    </recommendedName>
    <alternativeName>
        <fullName evidence="1">UDP-N-acetylmuramate dehydrogenase</fullName>
    </alternativeName>
</protein>
<reference key="1">
    <citation type="journal article" date="2007" name="J. Bacteriol.">
        <title>Complete genome of acute rheumatic fever-associated serotype M5 Streptococcus pyogenes strain Manfredo.</title>
        <authorList>
            <person name="Holden M.T.G."/>
            <person name="Scott A."/>
            <person name="Cherevach I."/>
            <person name="Chillingworth T."/>
            <person name="Churcher C."/>
            <person name="Cronin A."/>
            <person name="Dowd L."/>
            <person name="Feltwell T."/>
            <person name="Hamlin N."/>
            <person name="Holroyd S."/>
            <person name="Jagels K."/>
            <person name="Moule S."/>
            <person name="Mungall K."/>
            <person name="Quail M.A."/>
            <person name="Price C."/>
            <person name="Rabbinowitsch E."/>
            <person name="Sharp S."/>
            <person name="Skelton J."/>
            <person name="Whitehead S."/>
            <person name="Barrell B.G."/>
            <person name="Kehoe M."/>
            <person name="Parkhill J."/>
        </authorList>
    </citation>
    <scope>NUCLEOTIDE SEQUENCE [LARGE SCALE GENOMIC DNA]</scope>
    <source>
        <strain>Manfredo</strain>
    </source>
</reference>